<sequence length="74" mass="8512">MARAFFRRRKSCPFSAKDAPRIDYKDVRLLQGFVSERGKIVPSRITAVSAKKQRELAQAIKRARHIGLLPYIVK</sequence>
<reference key="1">
    <citation type="journal article" date="2010" name="J. Bacteriol.">
        <title>Genome sequence of the dioxin-mineralizing bacterium Sphingomonas wittichii RW1.</title>
        <authorList>
            <person name="Miller T.R."/>
            <person name="Delcher A.L."/>
            <person name="Salzberg S.L."/>
            <person name="Saunders E."/>
            <person name="Detter J.C."/>
            <person name="Halden R.U."/>
        </authorList>
    </citation>
    <scope>NUCLEOTIDE SEQUENCE [LARGE SCALE GENOMIC DNA]</scope>
    <source>
        <strain>DSM 6014 / CCUG 31198 / JCM 15750 / NBRC 105917 / EY 4224 / RW1</strain>
    </source>
</reference>
<gene>
    <name evidence="1" type="primary">rpsR</name>
    <name type="ordered locus">Swit_0084</name>
</gene>
<protein>
    <recommendedName>
        <fullName evidence="1">Small ribosomal subunit protein bS18</fullName>
    </recommendedName>
    <alternativeName>
        <fullName evidence="2">30S ribosomal protein S18</fullName>
    </alternativeName>
</protein>
<dbReference type="EMBL" id="CP000699">
    <property type="protein sequence ID" value="ABQ66457.1"/>
    <property type="molecule type" value="Genomic_DNA"/>
</dbReference>
<dbReference type="SMR" id="A5V2E1"/>
<dbReference type="STRING" id="392499.Swit_0084"/>
<dbReference type="PaxDb" id="392499-Swit_0084"/>
<dbReference type="KEGG" id="swi:Swit_0084"/>
<dbReference type="eggNOG" id="COG0238">
    <property type="taxonomic scope" value="Bacteria"/>
</dbReference>
<dbReference type="HOGENOM" id="CLU_148710_2_2_5"/>
<dbReference type="OrthoDB" id="9812008at2"/>
<dbReference type="Proteomes" id="UP000001989">
    <property type="component" value="Chromosome"/>
</dbReference>
<dbReference type="GO" id="GO:0022627">
    <property type="term" value="C:cytosolic small ribosomal subunit"/>
    <property type="evidence" value="ECO:0007669"/>
    <property type="project" value="TreeGrafter"/>
</dbReference>
<dbReference type="GO" id="GO:0070181">
    <property type="term" value="F:small ribosomal subunit rRNA binding"/>
    <property type="evidence" value="ECO:0007669"/>
    <property type="project" value="TreeGrafter"/>
</dbReference>
<dbReference type="GO" id="GO:0003735">
    <property type="term" value="F:structural constituent of ribosome"/>
    <property type="evidence" value="ECO:0007669"/>
    <property type="project" value="InterPro"/>
</dbReference>
<dbReference type="GO" id="GO:0006412">
    <property type="term" value="P:translation"/>
    <property type="evidence" value="ECO:0007669"/>
    <property type="project" value="UniProtKB-UniRule"/>
</dbReference>
<dbReference type="Gene3D" id="4.10.640.10">
    <property type="entry name" value="Ribosomal protein S18"/>
    <property type="match status" value="1"/>
</dbReference>
<dbReference type="HAMAP" id="MF_00270">
    <property type="entry name" value="Ribosomal_bS18"/>
    <property type="match status" value="1"/>
</dbReference>
<dbReference type="InterPro" id="IPR001648">
    <property type="entry name" value="Ribosomal_bS18"/>
</dbReference>
<dbReference type="InterPro" id="IPR018275">
    <property type="entry name" value="Ribosomal_bS18_CS"/>
</dbReference>
<dbReference type="InterPro" id="IPR036870">
    <property type="entry name" value="Ribosomal_bS18_sf"/>
</dbReference>
<dbReference type="NCBIfam" id="TIGR00165">
    <property type="entry name" value="S18"/>
    <property type="match status" value="1"/>
</dbReference>
<dbReference type="PANTHER" id="PTHR13479">
    <property type="entry name" value="30S RIBOSOMAL PROTEIN S18"/>
    <property type="match status" value="1"/>
</dbReference>
<dbReference type="PANTHER" id="PTHR13479:SF40">
    <property type="entry name" value="SMALL RIBOSOMAL SUBUNIT PROTEIN BS18M"/>
    <property type="match status" value="1"/>
</dbReference>
<dbReference type="Pfam" id="PF01084">
    <property type="entry name" value="Ribosomal_S18"/>
    <property type="match status" value="1"/>
</dbReference>
<dbReference type="PRINTS" id="PR00974">
    <property type="entry name" value="RIBOSOMALS18"/>
</dbReference>
<dbReference type="SUPFAM" id="SSF46911">
    <property type="entry name" value="Ribosomal protein S18"/>
    <property type="match status" value="1"/>
</dbReference>
<dbReference type="PROSITE" id="PS00057">
    <property type="entry name" value="RIBOSOMAL_S18"/>
    <property type="match status" value="1"/>
</dbReference>
<evidence type="ECO:0000255" key="1">
    <source>
        <dbReference type="HAMAP-Rule" id="MF_00270"/>
    </source>
</evidence>
<evidence type="ECO:0000305" key="2"/>
<comment type="function">
    <text evidence="1">Binds as a heterodimer with protein bS6 to the central domain of the 16S rRNA, where it helps stabilize the platform of the 30S subunit.</text>
</comment>
<comment type="subunit">
    <text evidence="1">Part of the 30S ribosomal subunit. Forms a tight heterodimer with protein bS6.</text>
</comment>
<comment type="similarity">
    <text evidence="1">Belongs to the bacterial ribosomal protein bS18 family.</text>
</comment>
<proteinExistence type="inferred from homology"/>
<keyword id="KW-1185">Reference proteome</keyword>
<keyword id="KW-0687">Ribonucleoprotein</keyword>
<keyword id="KW-0689">Ribosomal protein</keyword>
<keyword id="KW-0694">RNA-binding</keyword>
<keyword id="KW-0699">rRNA-binding</keyword>
<accession>A5V2E1</accession>
<organism>
    <name type="scientific">Rhizorhabdus wittichii (strain DSM 6014 / CCUG 31198 / JCM 15750 / NBRC 105917 / EY 4224 / RW1)</name>
    <name type="common">Sphingomonas wittichii</name>
    <dbReference type="NCBI Taxonomy" id="392499"/>
    <lineage>
        <taxon>Bacteria</taxon>
        <taxon>Pseudomonadati</taxon>
        <taxon>Pseudomonadota</taxon>
        <taxon>Alphaproteobacteria</taxon>
        <taxon>Sphingomonadales</taxon>
        <taxon>Sphingomonadaceae</taxon>
        <taxon>Rhizorhabdus</taxon>
    </lineage>
</organism>
<name>RS18_RHIWR</name>
<feature type="chain" id="PRO_0000345548" description="Small ribosomal subunit protein bS18">
    <location>
        <begin position="1"/>
        <end position="74"/>
    </location>
</feature>